<gene>
    <name evidence="1" type="primary">rpl44e</name>
    <name type="ordered locus">Ta1205</name>
</gene>
<organism>
    <name type="scientific">Thermoplasma acidophilum (strain ATCC 25905 / DSM 1728 / JCM 9062 / NBRC 15155 / AMRC-C165)</name>
    <dbReference type="NCBI Taxonomy" id="273075"/>
    <lineage>
        <taxon>Archaea</taxon>
        <taxon>Methanobacteriati</taxon>
        <taxon>Thermoplasmatota</taxon>
        <taxon>Thermoplasmata</taxon>
        <taxon>Thermoplasmatales</taxon>
        <taxon>Thermoplasmataceae</taxon>
        <taxon>Thermoplasma</taxon>
    </lineage>
</organism>
<dbReference type="EMBL" id="AL445066">
    <property type="protein sequence ID" value="CAC12330.1"/>
    <property type="molecule type" value="Genomic_DNA"/>
</dbReference>
<dbReference type="RefSeq" id="WP_010901612.1">
    <property type="nucleotide sequence ID" value="NC_002578.1"/>
</dbReference>
<dbReference type="SMR" id="Q9HIX1"/>
<dbReference type="FunCoup" id="Q9HIX1">
    <property type="interactions" value="201"/>
</dbReference>
<dbReference type="STRING" id="273075.gene:9572428"/>
<dbReference type="PaxDb" id="273075-Ta1205"/>
<dbReference type="EnsemblBacteria" id="CAC12330">
    <property type="protein sequence ID" value="CAC12330"/>
    <property type="gene ID" value="CAC12330"/>
</dbReference>
<dbReference type="KEGG" id="tac:Ta1205"/>
<dbReference type="eggNOG" id="arCOG04109">
    <property type="taxonomic scope" value="Archaea"/>
</dbReference>
<dbReference type="HOGENOM" id="CLU_114645_3_0_2"/>
<dbReference type="InParanoid" id="Q9HIX1"/>
<dbReference type="OrthoDB" id="52456at2157"/>
<dbReference type="Proteomes" id="UP000001024">
    <property type="component" value="Chromosome"/>
</dbReference>
<dbReference type="GO" id="GO:1990904">
    <property type="term" value="C:ribonucleoprotein complex"/>
    <property type="evidence" value="ECO:0007669"/>
    <property type="project" value="UniProtKB-KW"/>
</dbReference>
<dbReference type="GO" id="GO:0005840">
    <property type="term" value="C:ribosome"/>
    <property type="evidence" value="ECO:0007669"/>
    <property type="project" value="UniProtKB-KW"/>
</dbReference>
<dbReference type="GO" id="GO:0070180">
    <property type="term" value="F:large ribosomal subunit rRNA binding"/>
    <property type="evidence" value="ECO:0007669"/>
    <property type="project" value="UniProtKB-UniRule"/>
</dbReference>
<dbReference type="GO" id="GO:0003735">
    <property type="term" value="F:structural constituent of ribosome"/>
    <property type="evidence" value="ECO:0007669"/>
    <property type="project" value="InterPro"/>
</dbReference>
<dbReference type="GO" id="GO:0008270">
    <property type="term" value="F:zinc ion binding"/>
    <property type="evidence" value="ECO:0007669"/>
    <property type="project" value="UniProtKB-UniRule"/>
</dbReference>
<dbReference type="GO" id="GO:0006412">
    <property type="term" value="P:translation"/>
    <property type="evidence" value="ECO:0007669"/>
    <property type="project" value="UniProtKB-UniRule"/>
</dbReference>
<dbReference type="FunFam" id="3.10.450.80:FF:000001">
    <property type="entry name" value="60S ribosomal protein L44"/>
    <property type="match status" value="1"/>
</dbReference>
<dbReference type="Gene3D" id="3.10.450.80">
    <property type="match status" value="1"/>
</dbReference>
<dbReference type="HAMAP" id="MF_01476">
    <property type="entry name" value="Ribosomal_L44e"/>
    <property type="match status" value="1"/>
</dbReference>
<dbReference type="InterPro" id="IPR000552">
    <property type="entry name" value="Ribosomal_eL44"/>
</dbReference>
<dbReference type="InterPro" id="IPR053708">
    <property type="entry name" value="Ribosomal_LSU_eL42"/>
</dbReference>
<dbReference type="InterPro" id="IPR011332">
    <property type="entry name" value="Ribosomal_zn-bd"/>
</dbReference>
<dbReference type="NCBIfam" id="NF004425">
    <property type="entry name" value="PRK05767.1"/>
    <property type="match status" value="1"/>
</dbReference>
<dbReference type="PANTHER" id="PTHR10369">
    <property type="entry name" value="60S RIBOSOMAL PROTEIN L36A/L44"/>
    <property type="match status" value="1"/>
</dbReference>
<dbReference type="Pfam" id="PF00935">
    <property type="entry name" value="Ribosomal_L44"/>
    <property type="match status" value="1"/>
</dbReference>
<dbReference type="SUPFAM" id="SSF57829">
    <property type="entry name" value="Zn-binding ribosomal proteins"/>
    <property type="match status" value="1"/>
</dbReference>
<evidence type="ECO:0000255" key="1">
    <source>
        <dbReference type="HAMAP-Rule" id="MF_01476"/>
    </source>
</evidence>
<evidence type="ECO:0000305" key="2"/>
<feature type="chain" id="PRO_0000149156" description="Large ribosomal subunit protein eL42">
    <location>
        <begin position="1"/>
        <end position="93"/>
    </location>
</feature>
<feature type="zinc finger region" description="C4-type" evidence="1">
    <location>
        <begin position="11"/>
        <end position="74"/>
    </location>
</feature>
<feature type="binding site" evidence="1">
    <location>
        <position position="11"/>
    </location>
    <ligand>
        <name>Zn(2+)</name>
        <dbReference type="ChEBI" id="CHEBI:29105"/>
    </ligand>
</feature>
<feature type="binding site" evidence="1">
    <location>
        <position position="14"/>
    </location>
    <ligand>
        <name>Zn(2+)</name>
        <dbReference type="ChEBI" id="CHEBI:29105"/>
    </ligand>
</feature>
<feature type="binding site" evidence="1">
    <location>
        <position position="71"/>
    </location>
    <ligand>
        <name>Zn(2+)</name>
        <dbReference type="ChEBI" id="CHEBI:29105"/>
    </ligand>
</feature>
<feature type="binding site" evidence="1">
    <location>
        <position position="74"/>
    </location>
    <ligand>
        <name>Zn(2+)</name>
        <dbReference type="ChEBI" id="CHEBI:29105"/>
    </ligand>
</feature>
<accession>Q9HIX1</accession>
<reference key="1">
    <citation type="journal article" date="2000" name="Nature">
        <title>The genome sequence of the thermoacidophilic scavenger Thermoplasma acidophilum.</title>
        <authorList>
            <person name="Ruepp A."/>
            <person name="Graml W."/>
            <person name="Santos-Martinez M.-L."/>
            <person name="Koretke K.K."/>
            <person name="Volker C."/>
            <person name="Mewes H.-W."/>
            <person name="Frishman D."/>
            <person name="Stocker S."/>
            <person name="Lupas A.N."/>
            <person name="Baumeister W."/>
        </authorList>
    </citation>
    <scope>NUCLEOTIDE SEQUENCE [LARGE SCALE GENOMIC DNA]</scope>
    <source>
        <strain>ATCC 25905 / DSM 1728 / JCM 9062 / NBRC 15155 / AMRC-C165</strain>
    </source>
</reference>
<keyword id="KW-0479">Metal-binding</keyword>
<keyword id="KW-1185">Reference proteome</keyword>
<keyword id="KW-0687">Ribonucleoprotein</keyword>
<keyword id="KW-0689">Ribosomal protein</keyword>
<keyword id="KW-0694">RNA-binding</keyword>
<keyword id="KW-0699">rRNA-binding</keyword>
<keyword id="KW-0862">Zinc</keyword>
<keyword id="KW-0863">Zinc-finger</keyword>
<comment type="function">
    <text evidence="1">Binds to the 23S rRNA.</text>
</comment>
<comment type="cofactor">
    <cofactor evidence="1">
        <name>Zn(2+)</name>
        <dbReference type="ChEBI" id="CHEBI:29105"/>
    </cofactor>
    <text evidence="1">Binds 1 zinc ion per subunit.</text>
</comment>
<comment type="subunit">
    <text evidence="1">Part of the 50S ribosomal subunit.</text>
</comment>
<comment type="similarity">
    <text evidence="1">Belongs to the eukaryotic ribosomal protein eL42 family.</text>
</comment>
<protein>
    <recommendedName>
        <fullName evidence="1">Large ribosomal subunit protein eL42</fullName>
    </recommendedName>
    <alternativeName>
        <fullName evidence="2">50S ribosomal protein L44e</fullName>
    </alternativeName>
</protein>
<name>RL44E_THEAC</name>
<sequence>MKMPKKIMTYCPYCKKHTSHSVERVRKRKASELKAGQRRFRRVTSGYGGFPRPKFEGREKPTKRIALRLVCDECHKAITPPGIRAKKFEIVEA</sequence>
<proteinExistence type="inferred from homology"/>